<evidence type="ECO:0000255" key="1">
    <source>
        <dbReference type="HAMAP-Rule" id="MF_00456"/>
    </source>
</evidence>
<dbReference type="EC" id="2.7.2.11" evidence="1"/>
<dbReference type="EMBL" id="CP000269">
    <property type="protein sequence ID" value="ABR89160.1"/>
    <property type="molecule type" value="Genomic_DNA"/>
</dbReference>
<dbReference type="RefSeq" id="WP_012080840.1">
    <property type="nucleotide sequence ID" value="NC_009659.1"/>
</dbReference>
<dbReference type="SMR" id="A6T2D4"/>
<dbReference type="STRING" id="375286.mma_2991"/>
<dbReference type="KEGG" id="mms:mma_2991"/>
<dbReference type="eggNOG" id="COG0263">
    <property type="taxonomic scope" value="Bacteria"/>
</dbReference>
<dbReference type="HOGENOM" id="CLU_025400_2_0_4"/>
<dbReference type="OrthoDB" id="9804434at2"/>
<dbReference type="UniPathway" id="UPA00098">
    <property type="reaction ID" value="UER00359"/>
</dbReference>
<dbReference type="Proteomes" id="UP000006388">
    <property type="component" value="Chromosome"/>
</dbReference>
<dbReference type="GO" id="GO:0005829">
    <property type="term" value="C:cytosol"/>
    <property type="evidence" value="ECO:0007669"/>
    <property type="project" value="TreeGrafter"/>
</dbReference>
<dbReference type="GO" id="GO:0005524">
    <property type="term" value="F:ATP binding"/>
    <property type="evidence" value="ECO:0007669"/>
    <property type="project" value="UniProtKB-KW"/>
</dbReference>
<dbReference type="GO" id="GO:0004349">
    <property type="term" value="F:glutamate 5-kinase activity"/>
    <property type="evidence" value="ECO:0007669"/>
    <property type="project" value="UniProtKB-UniRule"/>
</dbReference>
<dbReference type="GO" id="GO:0003723">
    <property type="term" value="F:RNA binding"/>
    <property type="evidence" value="ECO:0007669"/>
    <property type="project" value="InterPro"/>
</dbReference>
<dbReference type="GO" id="GO:0055129">
    <property type="term" value="P:L-proline biosynthetic process"/>
    <property type="evidence" value="ECO:0007669"/>
    <property type="project" value="UniProtKB-UniRule"/>
</dbReference>
<dbReference type="CDD" id="cd04242">
    <property type="entry name" value="AAK_G5K_ProB"/>
    <property type="match status" value="1"/>
</dbReference>
<dbReference type="CDD" id="cd21157">
    <property type="entry name" value="PUA_G5K"/>
    <property type="match status" value="1"/>
</dbReference>
<dbReference type="FunFam" id="2.30.130.10:FF:000007">
    <property type="entry name" value="Glutamate 5-kinase"/>
    <property type="match status" value="1"/>
</dbReference>
<dbReference type="FunFam" id="3.40.1160.10:FF:000018">
    <property type="entry name" value="Glutamate 5-kinase"/>
    <property type="match status" value="1"/>
</dbReference>
<dbReference type="Gene3D" id="3.40.1160.10">
    <property type="entry name" value="Acetylglutamate kinase-like"/>
    <property type="match status" value="2"/>
</dbReference>
<dbReference type="Gene3D" id="2.30.130.10">
    <property type="entry name" value="PUA domain"/>
    <property type="match status" value="1"/>
</dbReference>
<dbReference type="HAMAP" id="MF_00456">
    <property type="entry name" value="ProB"/>
    <property type="match status" value="1"/>
</dbReference>
<dbReference type="InterPro" id="IPR036393">
    <property type="entry name" value="AceGlu_kinase-like_sf"/>
</dbReference>
<dbReference type="InterPro" id="IPR001048">
    <property type="entry name" value="Asp/Glu/Uridylate_kinase"/>
</dbReference>
<dbReference type="InterPro" id="IPR041739">
    <property type="entry name" value="G5K_ProB"/>
</dbReference>
<dbReference type="InterPro" id="IPR001057">
    <property type="entry name" value="Glu/AcGlu_kinase"/>
</dbReference>
<dbReference type="InterPro" id="IPR011529">
    <property type="entry name" value="Glu_5kinase"/>
</dbReference>
<dbReference type="InterPro" id="IPR005715">
    <property type="entry name" value="Glu_5kinase/COase_Synthase"/>
</dbReference>
<dbReference type="InterPro" id="IPR019797">
    <property type="entry name" value="Glutamate_5-kinase_CS"/>
</dbReference>
<dbReference type="InterPro" id="IPR002478">
    <property type="entry name" value="PUA"/>
</dbReference>
<dbReference type="InterPro" id="IPR015947">
    <property type="entry name" value="PUA-like_sf"/>
</dbReference>
<dbReference type="InterPro" id="IPR036974">
    <property type="entry name" value="PUA_sf"/>
</dbReference>
<dbReference type="NCBIfam" id="TIGR01027">
    <property type="entry name" value="proB"/>
    <property type="match status" value="1"/>
</dbReference>
<dbReference type="PANTHER" id="PTHR43654">
    <property type="entry name" value="GLUTAMATE 5-KINASE"/>
    <property type="match status" value="1"/>
</dbReference>
<dbReference type="PANTHER" id="PTHR43654:SF1">
    <property type="entry name" value="ISOPENTENYL PHOSPHATE KINASE"/>
    <property type="match status" value="1"/>
</dbReference>
<dbReference type="Pfam" id="PF00696">
    <property type="entry name" value="AA_kinase"/>
    <property type="match status" value="1"/>
</dbReference>
<dbReference type="Pfam" id="PF01472">
    <property type="entry name" value="PUA"/>
    <property type="match status" value="1"/>
</dbReference>
<dbReference type="PIRSF" id="PIRSF000729">
    <property type="entry name" value="GK"/>
    <property type="match status" value="1"/>
</dbReference>
<dbReference type="PRINTS" id="PR00474">
    <property type="entry name" value="GLU5KINASE"/>
</dbReference>
<dbReference type="SMART" id="SM00359">
    <property type="entry name" value="PUA"/>
    <property type="match status" value="1"/>
</dbReference>
<dbReference type="SUPFAM" id="SSF53633">
    <property type="entry name" value="Carbamate kinase-like"/>
    <property type="match status" value="1"/>
</dbReference>
<dbReference type="SUPFAM" id="SSF88697">
    <property type="entry name" value="PUA domain-like"/>
    <property type="match status" value="1"/>
</dbReference>
<dbReference type="PROSITE" id="PS00902">
    <property type="entry name" value="GLUTAMATE_5_KINASE"/>
    <property type="match status" value="1"/>
</dbReference>
<dbReference type="PROSITE" id="PS50890">
    <property type="entry name" value="PUA"/>
    <property type="match status" value="1"/>
</dbReference>
<name>PROB_JANMA</name>
<accession>A6T2D4</accession>
<protein>
    <recommendedName>
        <fullName evidence="1">Glutamate 5-kinase</fullName>
        <ecNumber evidence="1">2.7.2.11</ecNumber>
    </recommendedName>
    <alternativeName>
        <fullName evidence="1">Gamma-glutamyl kinase</fullName>
        <shortName evidence="1">GK</shortName>
    </alternativeName>
</protein>
<reference key="1">
    <citation type="journal article" date="2007" name="PLoS Genet.">
        <title>Genome analysis of Minibacterium massiliensis highlights the convergent evolution of water-living bacteria.</title>
        <authorList>
            <person name="Audic S."/>
            <person name="Robert C."/>
            <person name="Campagna B."/>
            <person name="Parinello H."/>
            <person name="Claverie J.-M."/>
            <person name="Raoult D."/>
            <person name="Drancourt M."/>
        </authorList>
    </citation>
    <scope>NUCLEOTIDE SEQUENCE [LARGE SCALE GENOMIC DNA]</scope>
    <source>
        <strain>Marseille</strain>
    </source>
</reference>
<organism>
    <name type="scientific">Janthinobacterium sp. (strain Marseille)</name>
    <name type="common">Minibacterium massiliensis</name>
    <dbReference type="NCBI Taxonomy" id="375286"/>
    <lineage>
        <taxon>Bacteria</taxon>
        <taxon>Pseudomonadati</taxon>
        <taxon>Pseudomonadota</taxon>
        <taxon>Betaproteobacteria</taxon>
        <taxon>Burkholderiales</taxon>
        <taxon>Oxalobacteraceae</taxon>
        <taxon>Janthinobacterium</taxon>
    </lineage>
</organism>
<feature type="chain" id="PRO_1000081067" description="Glutamate 5-kinase">
    <location>
        <begin position="1"/>
        <end position="372"/>
    </location>
</feature>
<feature type="domain" description="PUA" evidence="1">
    <location>
        <begin position="280"/>
        <end position="358"/>
    </location>
</feature>
<feature type="binding site" evidence="1">
    <location>
        <position position="14"/>
    </location>
    <ligand>
        <name>ATP</name>
        <dbReference type="ChEBI" id="CHEBI:30616"/>
    </ligand>
</feature>
<feature type="binding site" evidence="1">
    <location>
        <position position="54"/>
    </location>
    <ligand>
        <name>substrate</name>
    </ligand>
</feature>
<feature type="binding site" evidence="1">
    <location>
        <position position="141"/>
    </location>
    <ligand>
        <name>substrate</name>
    </ligand>
</feature>
<feature type="binding site" evidence="1">
    <location>
        <position position="153"/>
    </location>
    <ligand>
        <name>substrate</name>
    </ligand>
</feature>
<feature type="binding site" evidence="1">
    <location>
        <begin position="173"/>
        <end position="174"/>
    </location>
    <ligand>
        <name>ATP</name>
        <dbReference type="ChEBI" id="CHEBI:30616"/>
    </ligand>
</feature>
<keyword id="KW-0028">Amino-acid biosynthesis</keyword>
<keyword id="KW-0067">ATP-binding</keyword>
<keyword id="KW-0963">Cytoplasm</keyword>
<keyword id="KW-0418">Kinase</keyword>
<keyword id="KW-0547">Nucleotide-binding</keyword>
<keyword id="KW-0641">Proline biosynthesis</keyword>
<keyword id="KW-0808">Transferase</keyword>
<sequence>MDSVIQEAKRVIIKVGSSLVTNDGKGLDANAIQKWAAQIAQLRALGKEVVLVSSGAIVEGMQRLGFDKRPVGIHELQACAAVGQMGLAQIYETSFRQHDVRTAQILLTHADLADRERYLNARSTLFTLLRLGVVPIINENDTVVTDEIKFGDNDTLGALVANLIEADALIILTDQRGLFSADPRKDPNAVFIHEAKAGDLKLEAMAGGAGSSLGRGGMLTKILAAKRAAFSGAHTVIAWGREDNVLTRLAGGEAIGTQLTAQTAQLTARKQWMADHLQTAGAVVLDNGAVQKLTAEGKSLLPIGVTDVSGSFGRGDVITCIDQGGRAVARGISNYASSDARRIMRKPSADIAAILGFVEEPELIHRDNLVLL</sequence>
<gene>
    <name evidence="1" type="primary">proB</name>
    <name type="ordered locus">mma_2991</name>
</gene>
<proteinExistence type="inferred from homology"/>
<comment type="function">
    <text evidence="1">Catalyzes the transfer of a phosphate group to glutamate to form L-glutamate 5-phosphate.</text>
</comment>
<comment type="catalytic activity">
    <reaction evidence="1">
        <text>L-glutamate + ATP = L-glutamyl 5-phosphate + ADP</text>
        <dbReference type="Rhea" id="RHEA:14877"/>
        <dbReference type="ChEBI" id="CHEBI:29985"/>
        <dbReference type="ChEBI" id="CHEBI:30616"/>
        <dbReference type="ChEBI" id="CHEBI:58274"/>
        <dbReference type="ChEBI" id="CHEBI:456216"/>
        <dbReference type="EC" id="2.7.2.11"/>
    </reaction>
</comment>
<comment type="pathway">
    <text evidence="1">Amino-acid biosynthesis; L-proline biosynthesis; L-glutamate 5-semialdehyde from L-glutamate: step 1/2.</text>
</comment>
<comment type="subcellular location">
    <subcellularLocation>
        <location evidence="1">Cytoplasm</location>
    </subcellularLocation>
</comment>
<comment type="similarity">
    <text evidence="1">Belongs to the glutamate 5-kinase family.</text>
</comment>